<protein>
    <recommendedName>
        <fullName evidence="1">Autoinducer 2 import ATP-binding protein LsrA</fullName>
        <shortName evidence="1">AI-2 import ATP-binding protein LsrA</shortName>
        <ecNumber evidence="1">7.6.2.13</ecNumber>
    </recommendedName>
</protein>
<dbReference type="EC" id="7.6.2.13" evidence="1"/>
<dbReference type="EMBL" id="AJ967010">
    <property type="protein sequence ID" value="CAI91190.1"/>
    <property type="molecule type" value="Genomic_DNA"/>
</dbReference>
<dbReference type="RefSeq" id="WP_049584345.1">
    <property type="nucleotide sequence ID" value="NZ_FMWJ01000024.1"/>
</dbReference>
<dbReference type="SMR" id="Q2PBM0"/>
<dbReference type="STRING" id="29488.KS18_20635"/>
<dbReference type="GeneID" id="45657233"/>
<dbReference type="OrthoDB" id="9776369at2"/>
<dbReference type="GO" id="GO:0005886">
    <property type="term" value="C:plasma membrane"/>
    <property type="evidence" value="ECO:0007669"/>
    <property type="project" value="UniProtKB-SubCell"/>
</dbReference>
<dbReference type="GO" id="GO:0005524">
    <property type="term" value="F:ATP binding"/>
    <property type="evidence" value="ECO:0007669"/>
    <property type="project" value="UniProtKB-KW"/>
</dbReference>
<dbReference type="GO" id="GO:0016887">
    <property type="term" value="F:ATP hydrolysis activity"/>
    <property type="evidence" value="ECO:0007669"/>
    <property type="project" value="InterPro"/>
</dbReference>
<dbReference type="CDD" id="cd03216">
    <property type="entry name" value="ABC_Carb_Monos_I"/>
    <property type="match status" value="1"/>
</dbReference>
<dbReference type="CDD" id="cd03215">
    <property type="entry name" value="ABC_Carb_Monos_II"/>
    <property type="match status" value="1"/>
</dbReference>
<dbReference type="Gene3D" id="3.40.50.300">
    <property type="entry name" value="P-loop containing nucleotide triphosphate hydrolases"/>
    <property type="match status" value="2"/>
</dbReference>
<dbReference type="InterPro" id="IPR003593">
    <property type="entry name" value="AAA+_ATPase"/>
</dbReference>
<dbReference type="InterPro" id="IPR050107">
    <property type="entry name" value="ABC_carbohydrate_import_ATPase"/>
</dbReference>
<dbReference type="InterPro" id="IPR003439">
    <property type="entry name" value="ABC_transporter-like_ATP-bd"/>
</dbReference>
<dbReference type="InterPro" id="IPR017871">
    <property type="entry name" value="ABC_transporter-like_CS"/>
</dbReference>
<dbReference type="InterPro" id="IPR027417">
    <property type="entry name" value="P-loop_NTPase"/>
</dbReference>
<dbReference type="NCBIfam" id="NF011967">
    <property type="entry name" value="PRK15439.1"/>
    <property type="match status" value="1"/>
</dbReference>
<dbReference type="PANTHER" id="PTHR43790:SF2">
    <property type="entry name" value="AUTOINDUCER 2 IMPORT ATP-BINDING PROTEIN LSRA"/>
    <property type="match status" value="1"/>
</dbReference>
<dbReference type="PANTHER" id="PTHR43790">
    <property type="entry name" value="CARBOHYDRATE TRANSPORT ATP-BINDING PROTEIN MG119-RELATED"/>
    <property type="match status" value="1"/>
</dbReference>
<dbReference type="Pfam" id="PF00005">
    <property type="entry name" value="ABC_tran"/>
    <property type="match status" value="2"/>
</dbReference>
<dbReference type="SMART" id="SM00382">
    <property type="entry name" value="AAA"/>
    <property type="match status" value="2"/>
</dbReference>
<dbReference type="SUPFAM" id="SSF52540">
    <property type="entry name" value="P-loop containing nucleoside triphosphate hydrolases"/>
    <property type="match status" value="2"/>
</dbReference>
<dbReference type="PROSITE" id="PS00211">
    <property type="entry name" value="ABC_TRANSPORTER_1"/>
    <property type="match status" value="1"/>
</dbReference>
<dbReference type="PROSITE" id="PS50893">
    <property type="entry name" value="ABC_TRANSPORTER_2"/>
    <property type="match status" value="2"/>
</dbReference>
<gene>
    <name type="primary">lsrA</name>
</gene>
<proteinExistence type="inferred from homology"/>
<comment type="function">
    <text evidence="1">Part of the ABC transporter complex LsrABCD involved in autoinducer 2 (AI-2) import. Responsible for energy coupling to the transport system.</text>
</comment>
<comment type="catalytic activity">
    <reaction evidence="1">
        <text>ATP + H2O + (2R,4S)-2-methyl-2,3,3,4-tetrahydroxytetrahydrofuran-[AI-2-binding protein]Side 1 = ADP + phosphate + (2R,4S)-2-methyl-2,3,3,4-tetrahydroxytetrahydrofuranSide 2 + [AI-2-binding protein]Side 1.</text>
        <dbReference type="EC" id="7.6.2.13"/>
    </reaction>
</comment>
<comment type="subunit">
    <text evidence="1">The complex is composed of two ATP-binding proteins (LsrA), two transmembrane proteins (LsrC and LsrD) and a solute-binding protein (LsrB).</text>
</comment>
<comment type="subcellular location">
    <subcellularLocation>
        <location evidence="1">Cell inner membrane</location>
        <topology evidence="1">Peripheral membrane protein</topology>
    </subcellularLocation>
</comment>
<comment type="similarity">
    <text evidence="3">Belongs to the ABC transporter superfamily. AI-2 autoinducer porter (TC 3.A.1.2.8) family.</text>
</comment>
<keyword id="KW-0067">ATP-binding</keyword>
<keyword id="KW-0997">Cell inner membrane</keyword>
<keyword id="KW-1003">Cell membrane</keyword>
<keyword id="KW-0472">Membrane</keyword>
<keyword id="KW-0547">Nucleotide-binding</keyword>
<keyword id="KW-0677">Repeat</keyword>
<keyword id="KW-1278">Translocase</keyword>
<keyword id="KW-0813">Transport</keyword>
<feature type="chain" id="PRO_0000351297" description="Autoinducer 2 import ATP-binding protein LsrA">
    <location>
        <begin position="1"/>
        <end position="511"/>
    </location>
</feature>
<feature type="domain" description="ABC transporter 1" evidence="2">
    <location>
        <begin position="12"/>
        <end position="240"/>
    </location>
</feature>
<feature type="domain" description="ABC transporter 2" evidence="2">
    <location>
        <begin position="263"/>
        <end position="503"/>
    </location>
</feature>
<feature type="binding site" evidence="2">
    <location>
        <begin position="44"/>
        <end position="51"/>
    </location>
    <ligand>
        <name>ATP</name>
        <dbReference type="ChEBI" id="CHEBI:30616"/>
    </ligand>
</feature>
<evidence type="ECO:0000250" key="1">
    <source>
        <dbReference type="UniProtKB" id="P77257"/>
    </source>
</evidence>
<evidence type="ECO:0000255" key="2">
    <source>
        <dbReference type="PROSITE-ProRule" id="PRU00434"/>
    </source>
</evidence>
<evidence type="ECO:0000305" key="3"/>
<sequence length="511" mass="56019">MLHNNTAVPPLLEVSGISKQFSGVMVLKHIDFTLLPGQIHALLGGNGAGKSTLMKIIAGIEQPDKGILKISGHHVSHLNPTKAHQLGIYLIPQEPLLFPNLSVQENILFRLPKHQVDKSKMKQLLALLGCQLDLHVSASSLNVADQQLVEIMRGLMRNSKILILDEPTASLTPAETERLFTQLRELQQQGVGIIFISHKIPEIYQLAGQVSVMRDGSIALSGEIRDYTTDEIIQAITPVAKNQPLNGTQKLGLDLSNSPSQTASDRPILTVTKLSGEGFCNITFSVKPGEILGLAGVVGAGRTELAETLYGLRPAISGEIKLKQHSVNGLKTAQRLAQGLVYLPEDRQSSGLFLDSSLGWNICSLTHNRNTFWIRPAYDTAVLERYCQTLNIKFSHINQPIKTLSGGNQQKILIAKCLEAHPAVLIIDEPTRGVDVAARNDIYQLIRHIAQQQVAIIFISSDLDEVVRMADRVLVMHQGEINGELTKQQMDVDTIMHIAFGEHKPQQAASC</sequence>
<name>LSRA_PHOLU</name>
<accession>Q2PBM0</accession>
<reference key="1">
    <citation type="journal article" date="2006" name="J. Bacteriol.">
        <title>Whole-genome comparison between Photorhabdus strains to identify genomic regions involved in the specificity of nematode interaction.</title>
        <authorList>
            <person name="Gaudriault S."/>
            <person name="Duchaud E."/>
            <person name="Lanois A."/>
            <person name="Canoy A.-S."/>
            <person name="Bourot S."/>
            <person name="DeRose R."/>
            <person name="Kunst F."/>
            <person name="Boemare N."/>
            <person name="Givaudan A."/>
        </authorList>
    </citation>
    <scope>NUCLEOTIDE SEQUENCE [GENOMIC DNA]</scope>
    <source>
        <strain>ATCC 29999 / DSM 3368 / BCRC 14801 / CCM 7077 / CIP 106429 / NCIMB 12670 / Hb</strain>
    </source>
</reference>
<organism>
    <name type="scientific">Photorhabdus luminescens</name>
    <name type="common">Xenorhabdus luminescens</name>
    <dbReference type="NCBI Taxonomy" id="29488"/>
    <lineage>
        <taxon>Bacteria</taxon>
        <taxon>Pseudomonadati</taxon>
        <taxon>Pseudomonadota</taxon>
        <taxon>Gammaproteobacteria</taxon>
        <taxon>Enterobacterales</taxon>
        <taxon>Morganellaceae</taxon>
        <taxon>Photorhabdus</taxon>
    </lineage>
</organism>